<feature type="initiator methionine" description="Removed" evidence="1">
    <location>
        <position position="1"/>
    </location>
</feature>
<feature type="chain" id="PRO_1000094035" description="Formamidopyrimidine-DNA glycosylase">
    <location>
        <begin position="2"/>
        <end position="275"/>
    </location>
</feature>
<feature type="zinc finger region" description="FPG-type" evidence="2">
    <location>
        <begin position="241"/>
        <end position="275"/>
    </location>
</feature>
<feature type="active site" description="Schiff-base intermediate with DNA" evidence="2">
    <location>
        <position position="2"/>
    </location>
</feature>
<feature type="active site" description="Proton donor" evidence="2">
    <location>
        <position position="3"/>
    </location>
</feature>
<feature type="active site" description="Proton donor; for beta-elimination activity" evidence="2">
    <location>
        <position position="58"/>
    </location>
</feature>
<feature type="active site" description="Proton donor; for delta-elimination activity" evidence="2">
    <location>
        <position position="265"/>
    </location>
</feature>
<feature type="binding site" evidence="2">
    <location>
        <position position="93"/>
    </location>
    <ligand>
        <name>DNA</name>
        <dbReference type="ChEBI" id="CHEBI:16991"/>
    </ligand>
</feature>
<feature type="binding site" evidence="2">
    <location>
        <position position="111"/>
    </location>
    <ligand>
        <name>DNA</name>
        <dbReference type="ChEBI" id="CHEBI:16991"/>
    </ligand>
</feature>
<feature type="binding site" evidence="2">
    <location>
        <position position="156"/>
    </location>
    <ligand>
        <name>DNA</name>
        <dbReference type="ChEBI" id="CHEBI:16991"/>
    </ligand>
</feature>
<evidence type="ECO:0000250" key="1"/>
<evidence type="ECO:0000255" key="2">
    <source>
        <dbReference type="HAMAP-Rule" id="MF_00103"/>
    </source>
</evidence>
<accession>A9AEZ2</accession>
<protein>
    <recommendedName>
        <fullName evidence="2">Formamidopyrimidine-DNA glycosylase</fullName>
        <shortName evidence="2">Fapy-DNA glycosylase</shortName>
        <ecNumber evidence="2">3.2.2.23</ecNumber>
    </recommendedName>
    <alternativeName>
        <fullName evidence="2">DNA-(apurinic or apyrimidinic site) lyase MutM</fullName>
        <shortName evidence="2">AP lyase MutM</shortName>
        <ecNumber evidence="2">4.2.99.18</ecNumber>
    </alternativeName>
</protein>
<reference key="1">
    <citation type="submission" date="2007-10" db="EMBL/GenBank/DDBJ databases">
        <title>Complete sequence of chromosome 1 of Burkholderia multivorans ATCC 17616.</title>
        <authorList>
            <person name="Copeland A."/>
            <person name="Lucas S."/>
            <person name="Lapidus A."/>
            <person name="Barry K."/>
            <person name="Glavina del Rio T."/>
            <person name="Dalin E."/>
            <person name="Tice H."/>
            <person name="Pitluck S."/>
            <person name="Chain P."/>
            <person name="Malfatti S."/>
            <person name="Shin M."/>
            <person name="Vergez L."/>
            <person name="Schmutz J."/>
            <person name="Larimer F."/>
            <person name="Land M."/>
            <person name="Hauser L."/>
            <person name="Kyrpides N."/>
            <person name="Kim E."/>
            <person name="Tiedje J."/>
            <person name="Richardson P."/>
        </authorList>
    </citation>
    <scope>NUCLEOTIDE SEQUENCE [LARGE SCALE GENOMIC DNA]</scope>
    <source>
        <strain>ATCC 17616 / 249</strain>
    </source>
</reference>
<reference key="2">
    <citation type="submission" date="2007-04" db="EMBL/GenBank/DDBJ databases">
        <title>Complete genome sequence of Burkholderia multivorans ATCC 17616.</title>
        <authorList>
            <person name="Ohtsubo Y."/>
            <person name="Yamashita A."/>
            <person name="Kurokawa K."/>
            <person name="Takami H."/>
            <person name="Yuhara S."/>
            <person name="Nishiyama E."/>
            <person name="Endo R."/>
            <person name="Miyazaki R."/>
            <person name="Ono A."/>
            <person name="Yano K."/>
            <person name="Ito M."/>
            <person name="Sota M."/>
            <person name="Yuji N."/>
            <person name="Hattori M."/>
            <person name="Tsuda M."/>
        </authorList>
    </citation>
    <scope>NUCLEOTIDE SEQUENCE [LARGE SCALE GENOMIC DNA]</scope>
    <source>
        <strain>ATCC 17616 / 249</strain>
    </source>
</reference>
<sequence>MPELPEVEVTRRGIAPFVAGRRVERVDVRTAMLRWPVPAGLAEQLRAREVLAVERRGKYLLFEVDAGWFIVHLGMTGTLRVLPAGGVPVAAKHDHIDWIFDEFVLRFRDPRRFGAVLWHSREAGDVHAHPLLASLGVEPFSPAFDGALLHRRTRGRTVSVKQALLAGDIVVGVGNIYASESLFRAGIRPTTAAGKVSLPRYERLAEAVRATLADAIDRGGSTLRDFVGSNGESGYFQLDCFVYDRAGEPCRVCGTPIRQIVQGQRSTYFCPTCQR</sequence>
<dbReference type="EC" id="3.2.2.23" evidence="2"/>
<dbReference type="EC" id="4.2.99.18" evidence="2"/>
<dbReference type="EMBL" id="CP000868">
    <property type="protein sequence ID" value="ABX14212.1"/>
    <property type="molecule type" value="Genomic_DNA"/>
</dbReference>
<dbReference type="EMBL" id="AP009385">
    <property type="protein sequence ID" value="BAG44631.1"/>
    <property type="molecule type" value="Genomic_DNA"/>
</dbReference>
<dbReference type="RefSeq" id="WP_012212701.1">
    <property type="nucleotide sequence ID" value="NC_010084.1"/>
</dbReference>
<dbReference type="SMR" id="A9AEZ2"/>
<dbReference type="STRING" id="395019.BMULJ_02742"/>
<dbReference type="KEGG" id="bmj:BMULJ_02742"/>
<dbReference type="KEGG" id="bmu:Bmul_0517"/>
<dbReference type="eggNOG" id="COG0266">
    <property type="taxonomic scope" value="Bacteria"/>
</dbReference>
<dbReference type="HOGENOM" id="CLU_038423_1_1_4"/>
<dbReference type="Proteomes" id="UP000008815">
    <property type="component" value="Chromosome 1"/>
</dbReference>
<dbReference type="GO" id="GO:0034039">
    <property type="term" value="F:8-oxo-7,8-dihydroguanine DNA N-glycosylase activity"/>
    <property type="evidence" value="ECO:0007669"/>
    <property type="project" value="TreeGrafter"/>
</dbReference>
<dbReference type="GO" id="GO:0140078">
    <property type="term" value="F:class I DNA-(apurinic or apyrimidinic site) endonuclease activity"/>
    <property type="evidence" value="ECO:0007669"/>
    <property type="project" value="UniProtKB-EC"/>
</dbReference>
<dbReference type="GO" id="GO:0003684">
    <property type="term" value="F:damaged DNA binding"/>
    <property type="evidence" value="ECO:0007669"/>
    <property type="project" value="InterPro"/>
</dbReference>
<dbReference type="GO" id="GO:0008270">
    <property type="term" value="F:zinc ion binding"/>
    <property type="evidence" value="ECO:0007669"/>
    <property type="project" value="UniProtKB-UniRule"/>
</dbReference>
<dbReference type="GO" id="GO:0006284">
    <property type="term" value="P:base-excision repair"/>
    <property type="evidence" value="ECO:0007669"/>
    <property type="project" value="InterPro"/>
</dbReference>
<dbReference type="CDD" id="cd08966">
    <property type="entry name" value="EcFpg-like_N"/>
    <property type="match status" value="1"/>
</dbReference>
<dbReference type="FunFam" id="1.10.8.50:FF:000003">
    <property type="entry name" value="Formamidopyrimidine-DNA glycosylase"/>
    <property type="match status" value="1"/>
</dbReference>
<dbReference type="Gene3D" id="1.10.8.50">
    <property type="match status" value="1"/>
</dbReference>
<dbReference type="Gene3D" id="3.20.190.10">
    <property type="entry name" value="MutM-like, N-terminal"/>
    <property type="match status" value="1"/>
</dbReference>
<dbReference type="HAMAP" id="MF_00103">
    <property type="entry name" value="Fapy_DNA_glycosyl"/>
    <property type="match status" value="1"/>
</dbReference>
<dbReference type="InterPro" id="IPR015886">
    <property type="entry name" value="DNA_glyclase/AP_lyase_DNA-bd"/>
</dbReference>
<dbReference type="InterPro" id="IPR015887">
    <property type="entry name" value="DNA_glyclase_Znf_dom_DNA_BS"/>
</dbReference>
<dbReference type="InterPro" id="IPR020629">
    <property type="entry name" value="Formamido-pyr_DNA_Glyclase"/>
</dbReference>
<dbReference type="InterPro" id="IPR012319">
    <property type="entry name" value="FPG_cat"/>
</dbReference>
<dbReference type="InterPro" id="IPR035937">
    <property type="entry name" value="MutM-like_N-ter"/>
</dbReference>
<dbReference type="InterPro" id="IPR010979">
    <property type="entry name" value="Ribosomal_uS13-like_H2TH"/>
</dbReference>
<dbReference type="InterPro" id="IPR000214">
    <property type="entry name" value="Znf_DNA_glyclase/AP_lyase"/>
</dbReference>
<dbReference type="InterPro" id="IPR010663">
    <property type="entry name" value="Znf_FPG/IleRS"/>
</dbReference>
<dbReference type="NCBIfam" id="TIGR00577">
    <property type="entry name" value="fpg"/>
    <property type="match status" value="1"/>
</dbReference>
<dbReference type="NCBIfam" id="NF002211">
    <property type="entry name" value="PRK01103.1"/>
    <property type="match status" value="1"/>
</dbReference>
<dbReference type="PANTHER" id="PTHR22993">
    <property type="entry name" value="FORMAMIDOPYRIMIDINE-DNA GLYCOSYLASE"/>
    <property type="match status" value="1"/>
</dbReference>
<dbReference type="PANTHER" id="PTHR22993:SF9">
    <property type="entry name" value="FORMAMIDOPYRIMIDINE-DNA GLYCOSYLASE"/>
    <property type="match status" value="1"/>
</dbReference>
<dbReference type="Pfam" id="PF01149">
    <property type="entry name" value="Fapy_DNA_glyco"/>
    <property type="match status" value="1"/>
</dbReference>
<dbReference type="Pfam" id="PF06831">
    <property type="entry name" value="H2TH"/>
    <property type="match status" value="1"/>
</dbReference>
<dbReference type="Pfam" id="PF06827">
    <property type="entry name" value="zf-FPG_IleRS"/>
    <property type="match status" value="1"/>
</dbReference>
<dbReference type="SMART" id="SM00898">
    <property type="entry name" value="Fapy_DNA_glyco"/>
    <property type="match status" value="1"/>
</dbReference>
<dbReference type="SMART" id="SM01232">
    <property type="entry name" value="H2TH"/>
    <property type="match status" value="1"/>
</dbReference>
<dbReference type="SUPFAM" id="SSF57716">
    <property type="entry name" value="Glucocorticoid receptor-like (DNA-binding domain)"/>
    <property type="match status" value="1"/>
</dbReference>
<dbReference type="SUPFAM" id="SSF81624">
    <property type="entry name" value="N-terminal domain of MutM-like DNA repair proteins"/>
    <property type="match status" value="1"/>
</dbReference>
<dbReference type="SUPFAM" id="SSF46946">
    <property type="entry name" value="S13-like H2TH domain"/>
    <property type="match status" value="1"/>
</dbReference>
<dbReference type="PROSITE" id="PS51068">
    <property type="entry name" value="FPG_CAT"/>
    <property type="match status" value="1"/>
</dbReference>
<dbReference type="PROSITE" id="PS01242">
    <property type="entry name" value="ZF_FPG_1"/>
    <property type="match status" value="1"/>
</dbReference>
<dbReference type="PROSITE" id="PS51066">
    <property type="entry name" value="ZF_FPG_2"/>
    <property type="match status" value="1"/>
</dbReference>
<proteinExistence type="inferred from homology"/>
<comment type="function">
    <text evidence="2">Involved in base excision repair of DNA damaged by oxidation or by mutagenic agents. Acts as a DNA glycosylase that recognizes and removes damaged bases. Has a preference for oxidized purines, such as 7,8-dihydro-8-oxoguanine (8-oxoG). Has AP (apurinic/apyrimidinic) lyase activity and introduces nicks in the DNA strand. Cleaves the DNA backbone by beta-delta elimination to generate a single-strand break at the site of the removed base with both 3'- and 5'-phosphates.</text>
</comment>
<comment type="catalytic activity">
    <reaction evidence="2">
        <text>Hydrolysis of DNA containing ring-opened 7-methylguanine residues, releasing 2,6-diamino-4-hydroxy-5-(N-methyl)formamidopyrimidine.</text>
        <dbReference type="EC" id="3.2.2.23"/>
    </reaction>
</comment>
<comment type="catalytic activity">
    <reaction evidence="2">
        <text>2'-deoxyribonucleotide-(2'-deoxyribose 5'-phosphate)-2'-deoxyribonucleotide-DNA = a 3'-end 2'-deoxyribonucleotide-(2,3-dehydro-2,3-deoxyribose 5'-phosphate)-DNA + a 5'-end 5'-phospho-2'-deoxyribonucleoside-DNA + H(+)</text>
        <dbReference type="Rhea" id="RHEA:66592"/>
        <dbReference type="Rhea" id="RHEA-COMP:13180"/>
        <dbReference type="Rhea" id="RHEA-COMP:16897"/>
        <dbReference type="Rhea" id="RHEA-COMP:17067"/>
        <dbReference type="ChEBI" id="CHEBI:15378"/>
        <dbReference type="ChEBI" id="CHEBI:136412"/>
        <dbReference type="ChEBI" id="CHEBI:157695"/>
        <dbReference type="ChEBI" id="CHEBI:167181"/>
        <dbReference type="EC" id="4.2.99.18"/>
    </reaction>
</comment>
<comment type="cofactor">
    <cofactor evidence="2">
        <name>Zn(2+)</name>
        <dbReference type="ChEBI" id="CHEBI:29105"/>
    </cofactor>
    <text evidence="2">Binds 1 zinc ion per subunit.</text>
</comment>
<comment type="subunit">
    <text evidence="2">Monomer.</text>
</comment>
<comment type="similarity">
    <text evidence="2">Belongs to the FPG family.</text>
</comment>
<keyword id="KW-0227">DNA damage</keyword>
<keyword id="KW-0234">DNA repair</keyword>
<keyword id="KW-0238">DNA-binding</keyword>
<keyword id="KW-0326">Glycosidase</keyword>
<keyword id="KW-0378">Hydrolase</keyword>
<keyword id="KW-0456">Lyase</keyword>
<keyword id="KW-0479">Metal-binding</keyword>
<keyword id="KW-0511">Multifunctional enzyme</keyword>
<keyword id="KW-1185">Reference proteome</keyword>
<keyword id="KW-0862">Zinc</keyword>
<keyword id="KW-0863">Zinc-finger</keyword>
<organism>
    <name type="scientific">Burkholderia multivorans (strain ATCC 17616 / 249)</name>
    <dbReference type="NCBI Taxonomy" id="395019"/>
    <lineage>
        <taxon>Bacteria</taxon>
        <taxon>Pseudomonadati</taxon>
        <taxon>Pseudomonadota</taxon>
        <taxon>Betaproteobacteria</taxon>
        <taxon>Burkholderiales</taxon>
        <taxon>Burkholderiaceae</taxon>
        <taxon>Burkholderia</taxon>
        <taxon>Burkholderia cepacia complex</taxon>
    </lineage>
</organism>
<gene>
    <name evidence="2" type="primary">mutM</name>
    <name evidence="2" type="synonym">fpg</name>
    <name type="ordered locus">Bmul_0517</name>
    <name type="ordered locus">BMULJ_02742</name>
</gene>
<name>FPG_BURM1</name>